<name>YR571_MIMIV</name>
<organism>
    <name type="scientific">Acanthamoeba polyphaga mimivirus</name>
    <name type="common">APMV</name>
    <dbReference type="NCBI Taxonomy" id="212035"/>
    <lineage>
        <taxon>Viruses</taxon>
        <taxon>Varidnaviria</taxon>
        <taxon>Bamfordvirae</taxon>
        <taxon>Nucleocytoviricota</taxon>
        <taxon>Megaviricetes</taxon>
        <taxon>Imitervirales</taxon>
        <taxon>Mimiviridae</taxon>
        <taxon>Megamimivirinae</taxon>
        <taxon>Mimivirus</taxon>
        <taxon>Mimivirus bradfordmassiliense</taxon>
    </lineage>
</organism>
<accession>Q5UR46</accession>
<reference key="1">
    <citation type="journal article" date="2004" name="Science">
        <title>The 1.2-megabase genome sequence of Mimivirus.</title>
        <authorList>
            <person name="Raoult D."/>
            <person name="Audic S."/>
            <person name="Robert C."/>
            <person name="Abergel C."/>
            <person name="Renesto P."/>
            <person name="Ogata H."/>
            <person name="La Scola B."/>
            <person name="Susan M."/>
            <person name="Claverie J.-M."/>
        </authorList>
    </citation>
    <scope>NUCLEOTIDE SEQUENCE [LARGE SCALE GENOMIC DNA]</scope>
    <source>
        <strain>Rowbotham-Bradford</strain>
    </source>
</reference>
<sequence>MENSTPKKISESQIKNLALSGGGFYGFAVVGALKEIFDNYIDPNNIKTISGVSVGSIIATMLAIGYSIDEITKIMFEIDMDTLIKDSYFSYYTLWEKFGMYNADKLEQEIERIIRDKTHIKNCTFSQIEKNLIIVTTNLNYQRTRIFSKLETPTMIISKAVRMSISYPFIMVPVLFEGDLYGDGGETLNYPITLFDDDLDKTIGITFANHNENDDGTLKTRLPINNFYDYIVSLGLTMNRSSYISQISSKYLDRSIVIKINEDISSMQFNLDLKQKEYLFECGIKSVKQQIIKLINH</sequence>
<proteinExistence type="inferred from homology"/>
<dbReference type="EC" id="3.1.1.-"/>
<dbReference type="EMBL" id="AY653733">
    <property type="protein sequence ID" value="AAV50834.1"/>
    <property type="molecule type" value="Genomic_DNA"/>
</dbReference>
<dbReference type="SMR" id="Q5UR46"/>
<dbReference type="KEGG" id="vg:9925207"/>
<dbReference type="OrthoDB" id="6613at10239"/>
<dbReference type="Proteomes" id="UP000001134">
    <property type="component" value="Genome"/>
</dbReference>
<dbReference type="GO" id="GO:0016020">
    <property type="term" value="C:membrane"/>
    <property type="evidence" value="ECO:0007669"/>
    <property type="project" value="UniProtKB-SubCell"/>
</dbReference>
<dbReference type="GO" id="GO:0016787">
    <property type="term" value="F:hydrolase activity"/>
    <property type="evidence" value="ECO:0007669"/>
    <property type="project" value="UniProtKB-KW"/>
</dbReference>
<dbReference type="GO" id="GO:0016042">
    <property type="term" value="P:lipid catabolic process"/>
    <property type="evidence" value="ECO:0007669"/>
    <property type="project" value="UniProtKB-KW"/>
</dbReference>
<dbReference type="Gene3D" id="3.40.1090.10">
    <property type="entry name" value="Cytosolic phospholipase A2 catalytic domain"/>
    <property type="match status" value="2"/>
</dbReference>
<dbReference type="InterPro" id="IPR016035">
    <property type="entry name" value="Acyl_Trfase/lysoPLipase"/>
</dbReference>
<dbReference type="InterPro" id="IPR052580">
    <property type="entry name" value="Lipid_Hydrolase"/>
</dbReference>
<dbReference type="InterPro" id="IPR002641">
    <property type="entry name" value="PNPLA_dom"/>
</dbReference>
<dbReference type="PANTHER" id="PTHR46394">
    <property type="entry name" value="ANNEXIN"/>
    <property type="match status" value="1"/>
</dbReference>
<dbReference type="PANTHER" id="PTHR46394:SF1">
    <property type="entry name" value="PNPLA DOMAIN-CONTAINING PROTEIN"/>
    <property type="match status" value="1"/>
</dbReference>
<dbReference type="Pfam" id="PF01734">
    <property type="entry name" value="Patatin"/>
    <property type="match status" value="1"/>
</dbReference>
<dbReference type="SUPFAM" id="SSF52151">
    <property type="entry name" value="FabD/lysophospholipase-like"/>
    <property type="match status" value="1"/>
</dbReference>
<dbReference type="PROSITE" id="PS51635">
    <property type="entry name" value="PNPLA"/>
    <property type="match status" value="1"/>
</dbReference>
<organismHost>
    <name type="scientific">Acanthamoeba polyphaga</name>
    <name type="common">Amoeba</name>
    <dbReference type="NCBI Taxonomy" id="5757"/>
</organismHost>
<gene>
    <name type="ordered locus">MIMI_R571</name>
</gene>
<protein>
    <recommendedName>
        <fullName>Uncharacterized protein R571</fullName>
        <ecNumber>3.1.1.-</ecNumber>
    </recommendedName>
</protein>
<feature type="chain" id="PRO_0000253923" description="Uncharacterized protein R571">
    <location>
        <begin position="1"/>
        <end position="297"/>
    </location>
</feature>
<feature type="transmembrane region" description="Helical" evidence="2">
    <location>
        <begin position="17"/>
        <end position="37"/>
    </location>
</feature>
<feature type="transmembrane region" description="Helical" evidence="2">
    <location>
        <begin position="48"/>
        <end position="68"/>
    </location>
</feature>
<feature type="domain" description="PNPLA" evidence="3">
    <location>
        <begin position="17"/>
        <end position="196"/>
    </location>
</feature>
<feature type="short sequence motif" description="GXGXXG" evidence="3">
    <location>
        <begin position="21"/>
        <end position="26"/>
    </location>
</feature>
<feature type="short sequence motif" description="GXSXG" evidence="3">
    <location>
        <begin position="51"/>
        <end position="55"/>
    </location>
</feature>
<feature type="short sequence motif" description="DGA/G" evidence="3">
    <location>
        <begin position="183"/>
        <end position="185"/>
    </location>
</feature>
<feature type="active site" description="Nucleophile" evidence="3">
    <location>
        <position position="53"/>
    </location>
</feature>
<feature type="active site" description="Proton acceptor" evidence="3">
    <location>
        <position position="183"/>
    </location>
</feature>
<feature type="glycosylation site" description="N-linked (GlcNAc...) asparagine; by host" evidence="2">
    <location>
        <position position="122"/>
    </location>
</feature>
<feature type="glycosylation site" description="N-linked (GlcNAc...) asparagine; by host" evidence="2">
    <location>
        <position position="239"/>
    </location>
</feature>
<comment type="function">
    <text evidence="1">Probable lipid hydrolase.</text>
</comment>
<comment type="subcellular location">
    <subcellularLocation>
        <location evidence="4">Membrane</location>
        <topology evidence="4">Multi-pass membrane protein</topology>
    </subcellularLocation>
</comment>
<keyword id="KW-0325">Glycoprotein</keyword>
<keyword id="KW-0378">Hydrolase</keyword>
<keyword id="KW-0442">Lipid degradation</keyword>
<keyword id="KW-0443">Lipid metabolism</keyword>
<keyword id="KW-0472">Membrane</keyword>
<keyword id="KW-1185">Reference proteome</keyword>
<keyword id="KW-0812">Transmembrane</keyword>
<keyword id="KW-1133">Transmembrane helix</keyword>
<evidence type="ECO:0000250" key="1"/>
<evidence type="ECO:0000255" key="2"/>
<evidence type="ECO:0000255" key="3">
    <source>
        <dbReference type="PROSITE-ProRule" id="PRU01161"/>
    </source>
</evidence>
<evidence type="ECO:0000305" key="4"/>